<sequence length="670" mass="75308">MNASSWSLRNLPWFRATLAQWRYALRNTIAMCLALTVAYYLNLDEPYWAMTSAAVVSFPTVGGVISKSLGRIAGSLLGAIAALLLAGHTLNEPWFFLLSMSAWLGFCTWACAHFTNNVAYAFQLAGYTAAIIAFPMVNITEASQLWDIAQARVCEVIVGILCGGMMMMILPSSSDATALLTALKNMHARLLEHASLLWQPETTDAIRAAHEGVIGQILTMNLLRIQAFWSHYRFRQQNARLNALLHQQLRMTSVISSLRRMLLNWPSPPGATREILEQLLTALASSQTDVYTVARIIAPLRPTNVADYRHVAFWQRLRYFCRLYLQSSQELHRLQSDVDDHARLPRTSGLARHTDNAEAMWSGLRTFCTLMMIGAWSIASQWDAGANALTLAAISCVLYSAVAAPFKSLSLLMRTLVLLSLFSFVVKFGLMVQISDLWQFLLFLFPLLATMQLLKLQMPKFAALWGQLIVFMGSFIAVTNPPVYNFADFLNDNLAKIVGVALAWLAFAILRPGSDARKSRRHIRALRRDFVDQLSRHPTLSESEFESLTYHHVSQLSNSQDALARRWLLRWGIVLLNCSHVVWQLRDWESRSDPLSRVRDNCISLLRGVMSERGVQQKSLAATLEELQRICDSLARHHQPAARELAAIVWRLYCSLSQLEQAPPQGTLAS</sequence>
<organism>
    <name type="scientific">Escherichia coli O157:H7</name>
    <dbReference type="NCBI Taxonomy" id="83334"/>
    <lineage>
        <taxon>Bacteria</taxon>
        <taxon>Pseudomonadati</taxon>
        <taxon>Pseudomonadota</taxon>
        <taxon>Gammaproteobacteria</taxon>
        <taxon>Enterobacterales</taxon>
        <taxon>Enterobacteriaceae</taxon>
        <taxon>Escherichia</taxon>
    </lineage>
</organism>
<accession>Q8X638</accession>
<reference key="1">
    <citation type="journal article" date="2001" name="Nature">
        <title>Genome sequence of enterohaemorrhagic Escherichia coli O157:H7.</title>
        <authorList>
            <person name="Perna N.T."/>
            <person name="Plunkett G. III"/>
            <person name="Burland V."/>
            <person name="Mau B."/>
            <person name="Glasner J.D."/>
            <person name="Rose D.J."/>
            <person name="Mayhew G.F."/>
            <person name="Evans P.S."/>
            <person name="Gregor J."/>
            <person name="Kirkpatrick H.A."/>
            <person name="Posfai G."/>
            <person name="Hackett J."/>
            <person name="Klink S."/>
            <person name="Boutin A."/>
            <person name="Shao Y."/>
            <person name="Miller L."/>
            <person name="Grotbeck E.J."/>
            <person name="Davis N.W."/>
            <person name="Lim A."/>
            <person name="Dimalanta E.T."/>
            <person name="Potamousis K."/>
            <person name="Apodaca J."/>
            <person name="Anantharaman T.S."/>
            <person name="Lin J."/>
            <person name="Yen G."/>
            <person name="Schwartz D.C."/>
            <person name="Welch R.A."/>
            <person name="Blattner F.R."/>
        </authorList>
    </citation>
    <scope>NUCLEOTIDE SEQUENCE [LARGE SCALE GENOMIC DNA]</scope>
    <source>
        <strain>O157:H7 / EDL933 / ATCC 700927 / EHEC</strain>
    </source>
</reference>
<reference key="2">
    <citation type="journal article" date="2001" name="DNA Res.">
        <title>Complete genome sequence of enterohemorrhagic Escherichia coli O157:H7 and genomic comparison with a laboratory strain K-12.</title>
        <authorList>
            <person name="Hayashi T."/>
            <person name="Makino K."/>
            <person name="Ohnishi M."/>
            <person name="Kurokawa K."/>
            <person name="Ishii K."/>
            <person name="Yokoyama K."/>
            <person name="Han C.-G."/>
            <person name="Ohtsubo E."/>
            <person name="Nakayama K."/>
            <person name="Murata T."/>
            <person name="Tanaka M."/>
            <person name="Tobe T."/>
            <person name="Iida T."/>
            <person name="Takami H."/>
            <person name="Honda T."/>
            <person name="Sasakawa C."/>
            <person name="Ogasawara N."/>
            <person name="Yasunaga T."/>
            <person name="Kuhara S."/>
            <person name="Shiba T."/>
            <person name="Hattori M."/>
            <person name="Shinagawa H."/>
        </authorList>
    </citation>
    <scope>NUCLEOTIDE SEQUENCE [LARGE SCALE GENOMIC DNA]</scope>
    <source>
        <strain>O157:H7 / Sakai / RIMD 0509952 / EHEC</strain>
    </source>
</reference>
<protein>
    <recommendedName>
        <fullName>Uncharacterized transporter YdhK</fullName>
    </recommendedName>
</protein>
<comment type="subcellular location">
    <subcellularLocation>
        <location evidence="2">Cell membrane</location>
        <topology evidence="2">Multi-pass membrane protein</topology>
    </subcellularLocation>
</comment>
<comment type="similarity">
    <text evidence="2">Belongs to the aromatic acid exporter ArAE (TC 2.A.85) family.</text>
</comment>
<name>YDHK_ECO57</name>
<feature type="chain" id="PRO_0000210094" description="Uncharacterized transporter YdhK">
    <location>
        <begin position="1"/>
        <end position="670"/>
    </location>
</feature>
<feature type="transmembrane region" description="Helical" evidence="1">
    <location>
        <begin position="23"/>
        <end position="42"/>
    </location>
</feature>
<feature type="transmembrane region" description="Helical" evidence="1">
    <location>
        <begin position="47"/>
        <end position="69"/>
    </location>
</feature>
<feature type="transmembrane region" description="Helical" evidence="1">
    <location>
        <begin position="76"/>
        <end position="98"/>
    </location>
</feature>
<feature type="transmembrane region" description="Helical" evidence="1">
    <location>
        <begin position="118"/>
        <end position="140"/>
    </location>
</feature>
<feature type="transmembrane region" description="Helical" evidence="1">
    <location>
        <begin position="153"/>
        <end position="170"/>
    </location>
</feature>
<feature type="transmembrane region" description="Helical" evidence="1">
    <location>
        <begin position="381"/>
        <end position="403"/>
    </location>
</feature>
<feature type="transmembrane region" description="Helical" evidence="1">
    <location>
        <begin position="410"/>
        <end position="432"/>
    </location>
</feature>
<feature type="transmembrane region" description="Helical" evidence="1">
    <location>
        <begin position="437"/>
        <end position="454"/>
    </location>
</feature>
<feature type="transmembrane region" description="Helical" evidence="1">
    <location>
        <begin position="461"/>
        <end position="483"/>
    </location>
</feature>
<feature type="transmembrane region" description="Helical" evidence="1">
    <location>
        <begin position="493"/>
        <end position="510"/>
    </location>
</feature>
<gene>
    <name type="primary">ydhK</name>
    <name type="ordered locus">Z2660</name>
    <name type="ordered locus">ECs2354</name>
</gene>
<evidence type="ECO:0000255" key="1"/>
<evidence type="ECO:0000305" key="2"/>
<keyword id="KW-1003">Cell membrane</keyword>
<keyword id="KW-0472">Membrane</keyword>
<keyword id="KW-1185">Reference proteome</keyword>
<keyword id="KW-0812">Transmembrane</keyword>
<keyword id="KW-1133">Transmembrane helix</keyword>
<keyword id="KW-0813">Transport</keyword>
<dbReference type="EMBL" id="AE005174">
    <property type="protein sequence ID" value="AAG56634.1"/>
    <property type="molecule type" value="Genomic_DNA"/>
</dbReference>
<dbReference type="EMBL" id="BA000007">
    <property type="protein sequence ID" value="BAB35777.1"/>
    <property type="molecule type" value="Genomic_DNA"/>
</dbReference>
<dbReference type="PIR" id="B99923">
    <property type="entry name" value="B99923"/>
</dbReference>
<dbReference type="PIR" id="F85771">
    <property type="entry name" value="F85771"/>
</dbReference>
<dbReference type="RefSeq" id="NP_310381.1">
    <property type="nucleotide sequence ID" value="NC_002695.1"/>
</dbReference>
<dbReference type="RefSeq" id="WP_000994327.1">
    <property type="nucleotide sequence ID" value="NZ_VOAI01000007.1"/>
</dbReference>
<dbReference type="STRING" id="155864.Z2660"/>
<dbReference type="TCDB" id="2.A.85.1.6">
    <property type="family name" value="the aromatic acid exporter (arae) family"/>
</dbReference>
<dbReference type="GeneID" id="912808"/>
<dbReference type="KEGG" id="ece:Z2660"/>
<dbReference type="KEGG" id="ecs:ECs_2354"/>
<dbReference type="PATRIC" id="fig|386585.9.peg.2463"/>
<dbReference type="eggNOG" id="COG1289">
    <property type="taxonomic scope" value="Bacteria"/>
</dbReference>
<dbReference type="HOGENOM" id="CLU_013927_3_0_6"/>
<dbReference type="OMA" id="LNDPWLF"/>
<dbReference type="Proteomes" id="UP000000558">
    <property type="component" value="Chromosome"/>
</dbReference>
<dbReference type="Proteomes" id="UP000002519">
    <property type="component" value="Chromosome"/>
</dbReference>
<dbReference type="GO" id="GO:0005886">
    <property type="term" value="C:plasma membrane"/>
    <property type="evidence" value="ECO:0007669"/>
    <property type="project" value="UniProtKB-SubCell"/>
</dbReference>
<dbReference type="GO" id="GO:0022857">
    <property type="term" value="F:transmembrane transporter activity"/>
    <property type="evidence" value="ECO:0007669"/>
    <property type="project" value="InterPro"/>
</dbReference>
<dbReference type="InterPro" id="IPR006726">
    <property type="entry name" value="PHBA_efflux_AaeB/fusaric-R"/>
</dbReference>
<dbReference type="PANTHER" id="PTHR30509:SF9">
    <property type="entry name" value="MULTIDRUG RESISTANCE PROTEIN MDTO"/>
    <property type="match status" value="1"/>
</dbReference>
<dbReference type="PANTHER" id="PTHR30509">
    <property type="entry name" value="P-HYDROXYBENZOIC ACID EFFLUX PUMP SUBUNIT-RELATED"/>
    <property type="match status" value="1"/>
</dbReference>
<dbReference type="Pfam" id="PF04632">
    <property type="entry name" value="FUSC"/>
    <property type="match status" value="1"/>
</dbReference>
<proteinExistence type="inferred from homology"/>